<accession>B1IXS3</accession>
<proteinExistence type="inferred from homology"/>
<dbReference type="EC" id="4.2.99.20" evidence="1"/>
<dbReference type="EMBL" id="CP000946">
    <property type="protein sequence ID" value="ACA77049.1"/>
    <property type="molecule type" value="Genomic_DNA"/>
</dbReference>
<dbReference type="RefSeq" id="WP_000600505.1">
    <property type="nucleotide sequence ID" value="NC_010468.1"/>
</dbReference>
<dbReference type="SMR" id="B1IXS3"/>
<dbReference type="ESTHER" id="ecoli-YFBB">
    <property type="family name" value="MenH_SHCHC"/>
</dbReference>
<dbReference type="MEROPS" id="S33.996"/>
<dbReference type="KEGG" id="ecl:EcolC_1385"/>
<dbReference type="HOGENOM" id="CLU_020336_38_2_6"/>
<dbReference type="UniPathway" id="UPA00079"/>
<dbReference type="UniPathway" id="UPA01057">
    <property type="reaction ID" value="UER00900"/>
</dbReference>
<dbReference type="GO" id="GO:0070205">
    <property type="term" value="F:2-succinyl-6-hydroxy-2,4-cyclohexadiene-1-carboxylate synthase activity"/>
    <property type="evidence" value="ECO:0007669"/>
    <property type="project" value="UniProtKB-UniRule"/>
</dbReference>
<dbReference type="GO" id="GO:0009234">
    <property type="term" value="P:menaquinone biosynthetic process"/>
    <property type="evidence" value="ECO:0007669"/>
    <property type="project" value="UniProtKB-UniRule"/>
</dbReference>
<dbReference type="FunFam" id="3.40.50.1820:FF:000038">
    <property type="entry name" value="2-succinyl-6-hydroxy-2,4-cyclohexadiene-1-carboxylate synthase"/>
    <property type="match status" value="1"/>
</dbReference>
<dbReference type="Gene3D" id="3.40.50.1820">
    <property type="entry name" value="alpha/beta hydrolase"/>
    <property type="match status" value="1"/>
</dbReference>
<dbReference type="HAMAP" id="MF_01660">
    <property type="entry name" value="MenH"/>
    <property type="match status" value="1"/>
</dbReference>
<dbReference type="InterPro" id="IPR000073">
    <property type="entry name" value="AB_hydrolase_1"/>
</dbReference>
<dbReference type="InterPro" id="IPR029058">
    <property type="entry name" value="AB_hydrolase_fold"/>
</dbReference>
<dbReference type="InterPro" id="IPR022485">
    <property type="entry name" value="SHCHC_synthase_MenH"/>
</dbReference>
<dbReference type="NCBIfam" id="TIGR03695">
    <property type="entry name" value="menH_SHCHC"/>
    <property type="match status" value="1"/>
</dbReference>
<dbReference type="NCBIfam" id="NF008340">
    <property type="entry name" value="PRK11126.1"/>
    <property type="match status" value="1"/>
</dbReference>
<dbReference type="PANTHER" id="PTHR42916">
    <property type="entry name" value="2-SUCCINYL-5-ENOLPYRUVYL-6-HYDROXY-3-CYCLOHEXENE-1-CARBOXYLATE SYNTHASE"/>
    <property type="match status" value="1"/>
</dbReference>
<dbReference type="PANTHER" id="PTHR42916:SF1">
    <property type="entry name" value="PROTEIN PHYLLO, CHLOROPLASTIC"/>
    <property type="match status" value="1"/>
</dbReference>
<dbReference type="Pfam" id="PF12697">
    <property type="entry name" value="Abhydrolase_6"/>
    <property type="match status" value="1"/>
</dbReference>
<dbReference type="SUPFAM" id="SSF53474">
    <property type="entry name" value="alpha/beta-Hydrolases"/>
    <property type="match status" value="1"/>
</dbReference>
<keyword id="KW-0456">Lyase</keyword>
<keyword id="KW-0474">Menaquinone biosynthesis</keyword>
<evidence type="ECO:0000255" key="1">
    <source>
        <dbReference type="HAMAP-Rule" id="MF_01660"/>
    </source>
</evidence>
<reference key="1">
    <citation type="submission" date="2008-02" db="EMBL/GenBank/DDBJ databases">
        <title>Complete sequence of Escherichia coli C str. ATCC 8739.</title>
        <authorList>
            <person name="Copeland A."/>
            <person name="Lucas S."/>
            <person name="Lapidus A."/>
            <person name="Glavina del Rio T."/>
            <person name="Dalin E."/>
            <person name="Tice H."/>
            <person name="Bruce D."/>
            <person name="Goodwin L."/>
            <person name="Pitluck S."/>
            <person name="Kiss H."/>
            <person name="Brettin T."/>
            <person name="Detter J.C."/>
            <person name="Han C."/>
            <person name="Kuske C.R."/>
            <person name="Schmutz J."/>
            <person name="Larimer F."/>
            <person name="Land M."/>
            <person name="Hauser L."/>
            <person name="Kyrpides N."/>
            <person name="Mikhailova N."/>
            <person name="Ingram L."/>
            <person name="Richardson P."/>
        </authorList>
    </citation>
    <scope>NUCLEOTIDE SEQUENCE [LARGE SCALE GENOMIC DNA]</scope>
    <source>
        <strain>ATCC 8739 / DSM 1576 / NBRC 3972 / NCIMB 8545 / WDCM 00012 / Crooks</strain>
    </source>
</reference>
<organism>
    <name type="scientific">Escherichia coli (strain ATCC 8739 / DSM 1576 / NBRC 3972 / NCIMB 8545 / WDCM 00012 / Crooks)</name>
    <dbReference type="NCBI Taxonomy" id="481805"/>
    <lineage>
        <taxon>Bacteria</taxon>
        <taxon>Pseudomonadati</taxon>
        <taxon>Pseudomonadota</taxon>
        <taxon>Gammaproteobacteria</taxon>
        <taxon>Enterobacterales</taxon>
        <taxon>Enterobacteriaceae</taxon>
        <taxon>Escherichia</taxon>
    </lineage>
</organism>
<gene>
    <name evidence="1" type="primary">menH</name>
    <name type="ordered locus">EcolC_1385</name>
</gene>
<comment type="function">
    <text evidence="1">Catalyzes a proton abstraction reaction that results in 2,5-elimination of pyruvate from 2-succinyl-5-enolpyruvyl-6-hydroxy-3-cyclohexene-1-carboxylate (SEPHCHC) and the formation of 2-succinyl-6-hydroxy-2,4-cyclohexadiene-1-carboxylate (SHCHC).</text>
</comment>
<comment type="catalytic activity">
    <reaction evidence="1">
        <text>5-enolpyruvoyl-6-hydroxy-2-succinyl-cyclohex-3-ene-1-carboxylate = (1R,6R)-6-hydroxy-2-succinyl-cyclohexa-2,4-diene-1-carboxylate + pyruvate</text>
        <dbReference type="Rhea" id="RHEA:25597"/>
        <dbReference type="ChEBI" id="CHEBI:15361"/>
        <dbReference type="ChEBI" id="CHEBI:58689"/>
        <dbReference type="ChEBI" id="CHEBI:58818"/>
        <dbReference type="EC" id="4.2.99.20"/>
    </reaction>
</comment>
<comment type="pathway">
    <text evidence="1">Quinol/quinone metabolism; 1,4-dihydroxy-2-naphthoate biosynthesis; 1,4-dihydroxy-2-naphthoate from chorismate: step 3/7.</text>
</comment>
<comment type="pathway">
    <text evidence="1">Quinol/quinone metabolism; menaquinone biosynthesis.</text>
</comment>
<comment type="subunit">
    <text evidence="1">Monomer.</text>
</comment>
<comment type="similarity">
    <text evidence="1">Belongs to the AB hydrolase superfamily. MenH family.</text>
</comment>
<protein>
    <recommendedName>
        <fullName evidence="1">2-succinyl-6-hydroxy-2,4-cyclohexadiene-1-carboxylate synthase</fullName>
        <shortName evidence="1">SHCHC synthase</shortName>
        <ecNumber evidence="1">4.2.99.20</ecNumber>
    </recommendedName>
</protein>
<sequence length="252" mass="27712">MILHAQAKHGKPGLPWLVFLHGFSGDCHEWQEVGEAFADYSRLYVDLPGHGGSAAISVDGFDDVTDLLRKTLVSYNILDFWLVGYSLGGRVAMMATCQGLAGLCGVIVEGGHPGLQNAEQRAERQRSDRQWVQRFLTEPLTAVFADWYQQPVFASLNDDQRRELVALRSNNNGATLAAMLEATSLAVQPDLRANLSARTFAFYYLCGERDSKFRALAAELAADCHVIPRAGHNAHRENPAGVIASLAQILRF</sequence>
<feature type="chain" id="PRO_0000341905" description="2-succinyl-6-hydroxy-2,4-cyclohexadiene-1-carboxylate synthase">
    <location>
        <begin position="1"/>
        <end position="252"/>
    </location>
</feature>
<name>MENH_ECOLC</name>